<comment type="function">
    <text evidence="1">Catalyzes the phosphorylation of D-fructose 6-phosphate to fructose 1,6-bisphosphate by ATP, the first committing step of glycolysis.</text>
</comment>
<comment type="catalytic activity">
    <reaction evidence="1">
        <text>beta-D-fructose 6-phosphate + ATP = beta-D-fructose 1,6-bisphosphate + ADP + H(+)</text>
        <dbReference type="Rhea" id="RHEA:16109"/>
        <dbReference type="ChEBI" id="CHEBI:15378"/>
        <dbReference type="ChEBI" id="CHEBI:30616"/>
        <dbReference type="ChEBI" id="CHEBI:32966"/>
        <dbReference type="ChEBI" id="CHEBI:57634"/>
        <dbReference type="ChEBI" id="CHEBI:456216"/>
        <dbReference type="EC" id="2.7.1.11"/>
    </reaction>
</comment>
<comment type="cofactor">
    <cofactor evidence="1">
        <name>Mg(2+)</name>
        <dbReference type="ChEBI" id="CHEBI:18420"/>
    </cofactor>
</comment>
<comment type="activity regulation">
    <text evidence="1">Allosterically activated by ADP, AMP, or fructose 2,6-bisphosphate, and allosterically inhibited by ATP or citrate.</text>
</comment>
<comment type="pathway">
    <text evidence="1">Carbohydrate degradation; glycolysis; D-glyceraldehyde 3-phosphate and glycerone phosphate from D-glucose: step 3/4.</text>
</comment>
<comment type="subunit">
    <text evidence="1">Heterooctamer of 4 alpha and 4 beta chains.</text>
</comment>
<comment type="subcellular location">
    <subcellularLocation>
        <location evidence="1">Cytoplasm</location>
    </subcellularLocation>
</comment>
<comment type="similarity">
    <text evidence="1">Belongs to the phosphofructokinase type A (PFKA) family. ATP-dependent PFK group I subfamily. Eukaryotic two domain clade 'E' sub-subfamily.</text>
</comment>
<evidence type="ECO:0000255" key="1">
    <source>
        <dbReference type="HAMAP-Rule" id="MF_03184"/>
    </source>
</evidence>
<proteinExistence type="evidence at transcript level"/>
<keyword id="KW-0021">Allosteric enzyme</keyword>
<keyword id="KW-0067">ATP-binding</keyword>
<keyword id="KW-0963">Cytoplasm</keyword>
<keyword id="KW-0324">Glycolysis</keyword>
<keyword id="KW-0418">Kinase</keyword>
<keyword id="KW-0460">Magnesium</keyword>
<keyword id="KW-0479">Metal-binding</keyword>
<keyword id="KW-0547">Nucleotide-binding</keyword>
<keyword id="KW-1185">Reference proteome</keyword>
<keyword id="KW-0808">Transferase</keyword>
<dbReference type="EC" id="2.7.1.11" evidence="1"/>
<dbReference type="EMBL" id="AY142710">
    <property type="protein sequence ID" value="AAN34943.2"/>
    <property type="molecule type" value="mRNA"/>
</dbReference>
<dbReference type="EMBL" id="CR382130">
    <property type="protein sequence ID" value="CAG81088.1"/>
    <property type="molecule type" value="Genomic_DNA"/>
</dbReference>
<dbReference type="RefSeq" id="XP_502897.1">
    <property type="nucleotide sequence ID" value="XM_502897.1"/>
</dbReference>
<dbReference type="SMR" id="P59680"/>
<dbReference type="FunCoup" id="P59680">
    <property type="interactions" value="988"/>
</dbReference>
<dbReference type="STRING" id="284591.P59680"/>
<dbReference type="EnsemblFungi" id="CAG81088">
    <property type="protein sequence ID" value="CAG81088"/>
    <property type="gene ID" value="YALI0_D16357g"/>
</dbReference>
<dbReference type="KEGG" id="yli:2910306"/>
<dbReference type="VEuPathDB" id="FungiDB:YALI0_D16357g"/>
<dbReference type="HOGENOM" id="CLU_011053_0_0_1"/>
<dbReference type="InParanoid" id="P59680"/>
<dbReference type="OMA" id="EWQDQMC"/>
<dbReference type="OrthoDB" id="105605at4891"/>
<dbReference type="UniPathway" id="UPA00109">
    <property type="reaction ID" value="UER00182"/>
</dbReference>
<dbReference type="Proteomes" id="UP000001300">
    <property type="component" value="Chromosome D"/>
</dbReference>
<dbReference type="GO" id="GO:0005945">
    <property type="term" value="C:6-phosphofructokinase complex"/>
    <property type="evidence" value="ECO:0000318"/>
    <property type="project" value="GO_Central"/>
</dbReference>
<dbReference type="GO" id="GO:0005739">
    <property type="term" value="C:mitochondrion"/>
    <property type="evidence" value="ECO:0000318"/>
    <property type="project" value="GO_Central"/>
</dbReference>
<dbReference type="GO" id="GO:0003872">
    <property type="term" value="F:6-phosphofructokinase activity"/>
    <property type="evidence" value="ECO:0000318"/>
    <property type="project" value="GO_Central"/>
</dbReference>
<dbReference type="GO" id="GO:0005524">
    <property type="term" value="F:ATP binding"/>
    <property type="evidence" value="ECO:0007669"/>
    <property type="project" value="UniProtKB-KW"/>
</dbReference>
<dbReference type="GO" id="GO:0070095">
    <property type="term" value="F:fructose-6-phosphate binding"/>
    <property type="evidence" value="ECO:0000318"/>
    <property type="project" value="GO_Central"/>
</dbReference>
<dbReference type="GO" id="GO:0046872">
    <property type="term" value="F:metal ion binding"/>
    <property type="evidence" value="ECO:0007669"/>
    <property type="project" value="UniProtKB-KW"/>
</dbReference>
<dbReference type="GO" id="GO:0061621">
    <property type="term" value="P:canonical glycolysis"/>
    <property type="evidence" value="ECO:0000318"/>
    <property type="project" value="GO_Central"/>
</dbReference>
<dbReference type="GO" id="GO:0030388">
    <property type="term" value="P:fructose 1,6-bisphosphate metabolic process"/>
    <property type="evidence" value="ECO:0000318"/>
    <property type="project" value="GO_Central"/>
</dbReference>
<dbReference type="GO" id="GO:0006002">
    <property type="term" value="P:fructose 6-phosphate metabolic process"/>
    <property type="evidence" value="ECO:0000318"/>
    <property type="project" value="GO_Central"/>
</dbReference>
<dbReference type="FunFam" id="3.40.50.460:FF:000007">
    <property type="entry name" value="ATP-dependent 6-phosphofructokinase"/>
    <property type="match status" value="1"/>
</dbReference>
<dbReference type="FunFam" id="3.40.50.460:FF:000008">
    <property type="entry name" value="ATP-dependent 6-phosphofructokinase"/>
    <property type="match status" value="1"/>
</dbReference>
<dbReference type="Gene3D" id="3.40.50.450">
    <property type="match status" value="2"/>
</dbReference>
<dbReference type="Gene3D" id="3.10.180.10">
    <property type="entry name" value="2,3-Dihydroxybiphenyl 1,2-Dioxygenase, domain 1"/>
    <property type="match status" value="1"/>
</dbReference>
<dbReference type="Gene3D" id="3.40.50.460">
    <property type="entry name" value="Phosphofructokinase domain"/>
    <property type="match status" value="2"/>
</dbReference>
<dbReference type="HAMAP" id="MF_03184">
    <property type="entry name" value="Phosphofructokinase_I_E"/>
    <property type="match status" value="1"/>
</dbReference>
<dbReference type="InterPro" id="IPR009161">
    <property type="entry name" value="6-Pfructokinase_euk"/>
</dbReference>
<dbReference type="InterPro" id="IPR022953">
    <property type="entry name" value="ATP_PFK"/>
</dbReference>
<dbReference type="InterPro" id="IPR029068">
    <property type="entry name" value="Glyas_Bleomycin-R_OHBP_Dase"/>
</dbReference>
<dbReference type="InterPro" id="IPR040712">
    <property type="entry name" value="Pfk_N"/>
</dbReference>
<dbReference type="InterPro" id="IPR015912">
    <property type="entry name" value="Phosphofructokinase_CS"/>
</dbReference>
<dbReference type="InterPro" id="IPR000023">
    <property type="entry name" value="Phosphofructokinase_dom"/>
</dbReference>
<dbReference type="InterPro" id="IPR035966">
    <property type="entry name" value="PKF_sf"/>
</dbReference>
<dbReference type="NCBIfam" id="TIGR02478">
    <property type="entry name" value="6PF1K_euk"/>
    <property type="match status" value="1"/>
</dbReference>
<dbReference type="PANTHER" id="PTHR13697:SF4">
    <property type="entry name" value="ATP-DEPENDENT 6-PHOSPHOFRUCTOKINASE"/>
    <property type="match status" value="1"/>
</dbReference>
<dbReference type="PANTHER" id="PTHR13697">
    <property type="entry name" value="PHOSPHOFRUCTOKINASE"/>
    <property type="match status" value="1"/>
</dbReference>
<dbReference type="Pfam" id="PF00365">
    <property type="entry name" value="PFK"/>
    <property type="match status" value="2"/>
</dbReference>
<dbReference type="Pfam" id="PF18468">
    <property type="entry name" value="Pfk_N"/>
    <property type="match status" value="1"/>
</dbReference>
<dbReference type="PIRSF" id="PIRSF000533">
    <property type="entry name" value="ATP_PFK_euk"/>
    <property type="match status" value="1"/>
</dbReference>
<dbReference type="PRINTS" id="PR00476">
    <property type="entry name" value="PHFRCTKINASE"/>
</dbReference>
<dbReference type="SUPFAM" id="SSF53784">
    <property type="entry name" value="Phosphofructokinase"/>
    <property type="match status" value="2"/>
</dbReference>
<dbReference type="PROSITE" id="PS00433">
    <property type="entry name" value="PHOSPHOFRUCTOKINASE"/>
    <property type="match status" value="2"/>
</dbReference>
<gene>
    <name type="primary">PFK1</name>
    <name type="ordered locus">YALI0D16357g</name>
</gene>
<organism>
    <name type="scientific">Yarrowia lipolytica (strain CLIB 122 / E 150)</name>
    <name type="common">Yeast</name>
    <name type="synonym">Candida lipolytica</name>
    <dbReference type="NCBI Taxonomy" id="284591"/>
    <lineage>
        <taxon>Eukaryota</taxon>
        <taxon>Fungi</taxon>
        <taxon>Dikarya</taxon>
        <taxon>Ascomycota</taxon>
        <taxon>Saccharomycotina</taxon>
        <taxon>Dipodascomycetes</taxon>
        <taxon>Dipodascales</taxon>
        <taxon>Dipodascales incertae sedis</taxon>
        <taxon>Yarrowia</taxon>
    </lineage>
</organism>
<name>PFKA_YARLI</name>
<protein>
    <recommendedName>
        <fullName evidence="1">ATP-dependent 6-phosphofructokinase</fullName>
        <shortName evidence="1">ATP-PFK</shortName>
        <shortName evidence="1">Phosphofructokinase</shortName>
        <ecNumber evidence="1">2.7.1.11</ecNumber>
    </recommendedName>
    <alternativeName>
        <fullName evidence="1">Phosphohexokinase</fullName>
    </alternativeName>
</protein>
<feature type="chain" id="PRO_0000112044" description="ATP-dependent 6-phosphofructokinase">
    <location>
        <begin position="1"/>
        <end position="953"/>
    </location>
</feature>
<feature type="region of interest" description="N-terminal catalytic PFK domain 1">
    <location>
        <begin position="1"/>
        <end position="558"/>
    </location>
</feature>
<feature type="region of interest" description="Interdomain linker">
    <location>
        <begin position="559"/>
        <end position="572"/>
    </location>
</feature>
<feature type="region of interest" description="C-terminal regulatory PFK domain 2">
    <location>
        <begin position="573"/>
        <end position="953"/>
    </location>
</feature>
<feature type="active site" description="Proton acceptor" evidence="1">
    <location>
        <position position="334"/>
    </location>
</feature>
<feature type="binding site" evidence="1">
    <location>
        <position position="193"/>
    </location>
    <ligand>
        <name>ATP</name>
        <dbReference type="ChEBI" id="CHEBI:30616"/>
    </ligand>
</feature>
<feature type="binding site" evidence="1">
    <location>
        <begin position="256"/>
        <end position="257"/>
    </location>
    <ligand>
        <name>ATP</name>
        <dbReference type="ChEBI" id="CHEBI:30616"/>
    </ligand>
</feature>
<feature type="binding site" evidence="1">
    <location>
        <begin position="286"/>
        <end position="289"/>
    </location>
    <ligand>
        <name>ATP</name>
        <dbReference type="ChEBI" id="CHEBI:30616"/>
    </ligand>
</feature>
<feature type="binding site" evidence="1">
    <location>
        <position position="287"/>
    </location>
    <ligand>
        <name>Mg(2+)</name>
        <dbReference type="ChEBI" id="CHEBI:18420"/>
        <note>catalytic</note>
    </ligand>
</feature>
<feature type="binding site" description="in other chain" evidence="1">
    <location>
        <begin position="332"/>
        <end position="334"/>
    </location>
    <ligand>
        <name>substrate</name>
        <note>ligand shared between dimeric partners</note>
    </ligand>
</feature>
<feature type="binding site" evidence="1">
    <location>
        <position position="369"/>
    </location>
    <ligand>
        <name>substrate</name>
        <note>ligand shared between dimeric partners</note>
    </ligand>
</feature>
<feature type="binding site" description="in other chain" evidence="1">
    <location>
        <begin position="376"/>
        <end position="378"/>
    </location>
    <ligand>
        <name>substrate</name>
        <note>ligand shared between dimeric partners</note>
    </ligand>
</feature>
<feature type="binding site" description="in other chain" evidence="1">
    <location>
        <position position="433"/>
    </location>
    <ligand>
        <name>substrate</name>
        <note>ligand shared between dimeric partners</note>
    </ligand>
</feature>
<feature type="binding site" evidence="1">
    <location>
        <position position="460"/>
    </location>
    <ligand>
        <name>substrate</name>
        <note>ligand shared between dimeric partners</note>
    </ligand>
</feature>
<feature type="binding site" description="in other chain" evidence="1">
    <location>
        <begin position="466"/>
        <end position="469"/>
    </location>
    <ligand>
        <name>substrate</name>
        <note>ligand shared between dimeric partners</note>
    </ligand>
</feature>
<feature type="binding site" description="in other chain" evidence="1">
    <location>
        <position position="645"/>
    </location>
    <ligand>
        <name>beta-D-fructose 2,6-bisphosphate</name>
        <dbReference type="ChEBI" id="CHEBI:58579"/>
        <note>allosteric activator; ligand shared between dimeric partners</note>
    </ligand>
</feature>
<feature type="binding site" description="in other chain" evidence="1">
    <location>
        <begin position="702"/>
        <end position="706"/>
    </location>
    <ligand>
        <name>beta-D-fructose 2,6-bisphosphate</name>
        <dbReference type="ChEBI" id="CHEBI:58579"/>
        <note>allosteric activator; ligand shared between dimeric partners</note>
    </ligand>
</feature>
<feature type="binding site" evidence="1">
    <location>
        <position position="740"/>
    </location>
    <ligand>
        <name>beta-D-fructose 2,6-bisphosphate</name>
        <dbReference type="ChEBI" id="CHEBI:58579"/>
        <note>allosteric activator; ligand shared between dimeric partners</note>
    </ligand>
</feature>
<feature type="binding site" description="in other chain" evidence="1">
    <location>
        <begin position="747"/>
        <end position="749"/>
    </location>
    <ligand>
        <name>beta-D-fructose 2,6-bisphosphate</name>
        <dbReference type="ChEBI" id="CHEBI:58579"/>
        <note>allosteric activator; ligand shared between dimeric partners</note>
    </ligand>
</feature>
<feature type="binding site" description="in other chain" evidence="1">
    <location>
        <position position="807"/>
    </location>
    <ligand>
        <name>beta-D-fructose 2,6-bisphosphate</name>
        <dbReference type="ChEBI" id="CHEBI:58579"/>
        <note>allosteric activator; ligand shared between dimeric partners</note>
    </ligand>
</feature>
<feature type="binding site" evidence="1">
    <location>
        <position position="833"/>
    </location>
    <ligand>
        <name>beta-D-fructose 2,6-bisphosphate</name>
        <dbReference type="ChEBI" id="CHEBI:58579"/>
        <note>allosteric activator; ligand shared between dimeric partners</note>
    </ligand>
</feature>
<feature type="binding site" description="in other chain" evidence="1">
    <location>
        <begin position="839"/>
        <end position="842"/>
    </location>
    <ligand>
        <name>beta-D-fructose 2,6-bisphosphate</name>
        <dbReference type="ChEBI" id="CHEBI:58579"/>
        <note>allosteric activator; ligand shared between dimeric partners</note>
    </ligand>
</feature>
<feature type="binding site" description="in other chain" evidence="1">
    <location>
        <position position="906"/>
    </location>
    <ligand>
        <name>beta-D-fructose 2,6-bisphosphate</name>
        <dbReference type="ChEBI" id="CHEBI:58579"/>
        <note>allosteric activator; ligand shared between dimeric partners</note>
    </ligand>
</feature>
<reference key="1">
    <citation type="submission" date="2004-05" db="EMBL/GenBank/DDBJ databases">
        <title>The phosphofructokinase from the yeast Yarrowia lipolytica.</title>
        <authorList>
            <person name="Flores C.L."/>
            <person name="Martinez-Costa O.H."/>
            <person name="Sanchez V."/>
            <person name="Aragon J.J."/>
            <person name="Gancedo C."/>
        </authorList>
    </citation>
    <scope>NUCLEOTIDE SEQUENCE [MRNA]</scope>
</reference>
<reference key="2">
    <citation type="journal article" date="2004" name="Nature">
        <title>Genome evolution in yeasts.</title>
        <authorList>
            <person name="Dujon B."/>
            <person name="Sherman D."/>
            <person name="Fischer G."/>
            <person name="Durrens P."/>
            <person name="Casaregola S."/>
            <person name="Lafontaine I."/>
            <person name="de Montigny J."/>
            <person name="Marck C."/>
            <person name="Neuveglise C."/>
            <person name="Talla E."/>
            <person name="Goffard N."/>
            <person name="Frangeul L."/>
            <person name="Aigle M."/>
            <person name="Anthouard V."/>
            <person name="Babour A."/>
            <person name="Barbe V."/>
            <person name="Barnay S."/>
            <person name="Blanchin S."/>
            <person name="Beckerich J.-M."/>
            <person name="Beyne E."/>
            <person name="Bleykasten C."/>
            <person name="Boisrame A."/>
            <person name="Boyer J."/>
            <person name="Cattolico L."/>
            <person name="Confanioleri F."/>
            <person name="de Daruvar A."/>
            <person name="Despons L."/>
            <person name="Fabre E."/>
            <person name="Fairhead C."/>
            <person name="Ferry-Dumazet H."/>
            <person name="Groppi A."/>
            <person name="Hantraye F."/>
            <person name="Hennequin C."/>
            <person name="Jauniaux N."/>
            <person name="Joyet P."/>
            <person name="Kachouri R."/>
            <person name="Kerrest A."/>
            <person name="Koszul R."/>
            <person name="Lemaire M."/>
            <person name="Lesur I."/>
            <person name="Ma L."/>
            <person name="Muller H."/>
            <person name="Nicaud J.-M."/>
            <person name="Nikolski M."/>
            <person name="Oztas S."/>
            <person name="Ozier-Kalogeropoulos O."/>
            <person name="Pellenz S."/>
            <person name="Potier S."/>
            <person name="Richard G.-F."/>
            <person name="Straub M.-L."/>
            <person name="Suleau A."/>
            <person name="Swennen D."/>
            <person name="Tekaia F."/>
            <person name="Wesolowski-Louvel M."/>
            <person name="Westhof E."/>
            <person name="Wirth B."/>
            <person name="Zeniou-Meyer M."/>
            <person name="Zivanovic Y."/>
            <person name="Bolotin-Fukuhara M."/>
            <person name="Thierry A."/>
            <person name="Bouchier C."/>
            <person name="Caudron B."/>
            <person name="Scarpelli C."/>
            <person name="Gaillardin C."/>
            <person name="Weissenbach J."/>
            <person name="Wincker P."/>
            <person name="Souciet J.-L."/>
        </authorList>
    </citation>
    <scope>NUCLEOTIDE SEQUENCE [LARGE SCALE GENOMIC DNA]</scope>
    <source>
        <strain>CLIB 122 / E 150</strain>
    </source>
</reference>
<accession>P59680</accession>
<sequence>MIEGISFASFVTHEKPKFVRALDFYKALGFLPTKEYKHGTDHHATDEEGAGSIQEVWLTSSRAGVPSVTVKLRLSRHGNEHVSLPNLKHDWRSLVPSLVYYAPDLDAVRAAITPFLHEDHSTLLERPSHTNFIELYAIDPMGNLVGFSRRENPYSSAMQKPFSADDIGPQNFSKPNETKIKGKKRIGVMTSGGDAPGMCAAVRAVVRAGIARGCEVYAVREGYEGLVKGGDLIEPLSWEDVRGWLSLGGTLIGTARCKEFREREGRLAGALNMVKNGIDALIVIGGDGSLTGADLFREEWPSLIEELVTNGSITAEQAERHRHLDICGMVGSIDNDMATTDVTIGAYSSLDRICELVDFIDATAQSHSRAFVVEVMGRHCGWLALMAGTATGADYIFIPEAAPDATQWAEKMTRVVKRHRSQGKRKTVVIVAEGAIDSDLNPITAKMVKDVLDGIGLDTRISTLGHVQRGGPPVAADRVLASLQGVEAIDAILSLTPETPSPMIALNENKITRKPLVESVALTKKVADAIGNKDFAEAMRLRNPEFVEQLQGFLLTNSADKDRPQEPAKDPLRVAIVCTGAPAGGMNAAIRSAVLYGLARGHQMFAIHNGWSGLVKNGDDAVRELTWLEVEPLCQKGGCEIGTNRSLPECDLGMIAYHFQRQRFDGLIVIGGFEAFRALNQLDDARHAYPALRIPMVGIPATISNNVPGTDYSLGADTCLNSLVQYCDVLKTSASATRLRLFVVEVQGGNSGYIATVAGLITGAYVVYTPESGINLRLLQHDISYLKDTFAHQADVNRTGKLLLRNERSSNVFTTDVITGIINEEAKGSFDARTAIPGHVQQGGHPSPTDRVRAQRFAIKAVQFIEEHHGSKNNADHCVILGVRGSKFKYTSVSHLYAHKTEHGARRPKHSYWHAIGDIANMLVGRKAPPLPETLNDEIEKNIAKEQGIIDPC</sequence>